<sequence>MNPKMILTGVSKKYTLYRNNTEKLKAMFFPKTREQHRDFYALKDINLEVYEGETIGVIGINGSGKSTISNILASVIPPTEGEMTVNGETSLIAINVGLNKNLNGYENIEQKCLMHGFSKKEIEELMPAIEEFADIGDFIDQPVKSYSSGMKSRLGFAISAHTNPDILIVDEALSVGDKTFYQKCKDKIDEFKAQNKTIVFISHNIKEIKNLSDRVLWLHNGEVREFGDKNEVIKQYEDYINWFNKLSKEEKEAHKQELKEMRSLAPSLYEEQENGKAGSGGDGTQPIVQPKRDKQAVKSAVWFFSQLVVFAVIFLTAAYFLVVPQLTDGSGSEELEQVAVGAEVQAGTSMGDIDNSDVSL</sequence>
<proteinExistence type="inferred from homology"/>
<feature type="chain" id="PRO_0000092987" description="Teichoic acids export ATP-binding protein TagH">
    <location>
        <begin position="1"/>
        <end position="360"/>
    </location>
</feature>
<feature type="domain" description="ABC transporter" evidence="1">
    <location>
        <begin position="24"/>
        <end position="245"/>
    </location>
</feature>
<feature type="region of interest" description="Unknown">
    <location>
        <begin position="246"/>
        <end position="360"/>
    </location>
</feature>
<feature type="region of interest" description="Disordered" evidence="2">
    <location>
        <begin position="270"/>
        <end position="290"/>
    </location>
</feature>
<feature type="binding site" evidence="1">
    <location>
        <begin position="59"/>
        <end position="66"/>
    </location>
    <ligand>
        <name>ATP</name>
        <dbReference type="ChEBI" id="CHEBI:30616"/>
    </ligand>
</feature>
<accession>Q5WCL2</accession>
<reference key="1">
    <citation type="submission" date="2003-10" db="EMBL/GenBank/DDBJ databases">
        <title>The complete genome sequence of the alkaliphilic Bacillus clausii KSM-K16.</title>
        <authorList>
            <person name="Takaki Y."/>
            <person name="Kageyama Y."/>
            <person name="Shimamura S."/>
            <person name="Suzuki H."/>
            <person name="Nishi S."/>
            <person name="Hatada Y."/>
            <person name="Kawai S."/>
            <person name="Ito S."/>
            <person name="Horikoshi K."/>
        </authorList>
    </citation>
    <scope>NUCLEOTIDE SEQUENCE [LARGE SCALE GENOMIC DNA]</scope>
    <source>
        <strain>KSM-K16</strain>
    </source>
</reference>
<keyword id="KW-0067">ATP-binding</keyword>
<keyword id="KW-1003">Cell membrane</keyword>
<keyword id="KW-0472">Membrane</keyword>
<keyword id="KW-0547">Nucleotide-binding</keyword>
<keyword id="KW-1185">Reference proteome</keyword>
<keyword id="KW-1278">Translocase</keyword>
<keyword id="KW-0813">Transport</keyword>
<protein>
    <recommendedName>
        <fullName evidence="1">Teichoic acids export ATP-binding protein TagH</fullName>
        <ecNumber evidence="1">7.5.2.4</ecNumber>
    </recommendedName>
</protein>
<organism>
    <name type="scientific">Shouchella clausii (strain KSM-K16)</name>
    <name type="common">Alkalihalobacillus clausii</name>
    <dbReference type="NCBI Taxonomy" id="66692"/>
    <lineage>
        <taxon>Bacteria</taxon>
        <taxon>Bacillati</taxon>
        <taxon>Bacillota</taxon>
        <taxon>Bacilli</taxon>
        <taxon>Bacillales</taxon>
        <taxon>Bacillaceae</taxon>
        <taxon>Shouchella</taxon>
    </lineage>
</organism>
<evidence type="ECO:0000255" key="1">
    <source>
        <dbReference type="HAMAP-Rule" id="MF_01715"/>
    </source>
</evidence>
<evidence type="ECO:0000256" key="2">
    <source>
        <dbReference type="SAM" id="MobiDB-lite"/>
    </source>
</evidence>
<name>TAGH_SHOC1</name>
<gene>
    <name evidence="1" type="primary">tagH</name>
    <name type="ordered locus">ABC3365</name>
</gene>
<comment type="function">
    <text evidence="1">Part of the ABC transporter complex TagGH involved in teichoic acids export. Responsible for energy coupling to the transport system.</text>
</comment>
<comment type="catalytic activity">
    <reaction evidence="1">
        <text>ATP + H2O + teichoic acidSide 1 = ADP + phosphate + teichoic acidSide 2.</text>
        <dbReference type="EC" id="7.5.2.4"/>
    </reaction>
</comment>
<comment type="subunit">
    <text evidence="1">The complex is composed of two ATP-binding proteins (TagH) and two transmembrane proteins (TagG).</text>
</comment>
<comment type="subcellular location">
    <subcellularLocation>
        <location evidence="1">Cell membrane</location>
        <topology evidence="1">Peripheral membrane protein</topology>
    </subcellularLocation>
</comment>
<comment type="similarity">
    <text evidence="1">Belongs to the ABC transporter superfamily. Teichoic acids exporter (TC 3.A.1.104.1) family.</text>
</comment>
<dbReference type="EC" id="7.5.2.4" evidence="1"/>
<dbReference type="EMBL" id="AP006627">
    <property type="protein sequence ID" value="BAD65898.1"/>
    <property type="molecule type" value="Genomic_DNA"/>
</dbReference>
<dbReference type="RefSeq" id="WP_011248204.1">
    <property type="nucleotide sequence ID" value="NC_006582.1"/>
</dbReference>
<dbReference type="SMR" id="Q5WCL2"/>
<dbReference type="STRING" id="66692.ABC3365"/>
<dbReference type="KEGG" id="bcl:ABC3365"/>
<dbReference type="eggNOG" id="COG1134">
    <property type="taxonomic scope" value="Bacteria"/>
</dbReference>
<dbReference type="HOGENOM" id="CLU_000604_101_8_9"/>
<dbReference type="OrthoDB" id="9778870at2"/>
<dbReference type="Proteomes" id="UP000001168">
    <property type="component" value="Chromosome"/>
</dbReference>
<dbReference type="GO" id="GO:0005886">
    <property type="term" value="C:plasma membrane"/>
    <property type="evidence" value="ECO:0007669"/>
    <property type="project" value="UniProtKB-SubCell"/>
</dbReference>
<dbReference type="GO" id="GO:0015438">
    <property type="term" value="F:ABC-type teichoic acid transporter activity"/>
    <property type="evidence" value="ECO:0007669"/>
    <property type="project" value="UniProtKB-EC"/>
</dbReference>
<dbReference type="GO" id="GO:0005524">
    <property type="term" value="F:ATP binding"/>
    <property type="evidence" value="ECO:0007669"/>
    <property type="project" value="UniProtKB-KW"/>
</dbReference>
<dbReference type="GO" id="GO:0016887">
    <property type="term" value="F:ATP hydrolysis activity"/>
    <property type="evidence" value="ECO:0007669"/>
    <property type="project" value="InterPro"/>
</dbReference>
<dbReference type="CDD" id="cd03220">
    <property type="entry name" value="ABC_KpsT_Wzt"/>
    <property type="match status" value="1"/>
</dbReference>
<dbReference type="FunFam" id="3.40.50.300:FF:003010">
    <property type="entry name" value="Teichoic acids export ATP-binding protein TagH"/>
    <property type="match status" value="1"/>
</dbReference>
<dbReference type="Gene3D" id="3.40.50.300">
    <property type="entry name" value="P-loop containing nucleotide triphosphate hydrolases"/>
    <property type="match status" value="1"/>
</dbReference>
<dbReference type="InterPro" id="IPR003593">
    <property type="entry name" value="AAA+_ATPase"/>
</dbReference>
<dbReference type="InterPro" id="IPR003439">
    <property type="entry name" value="ABC_transporter-like_ATP-bd"/>
</dbReference>
<dbReference type="InterPro" id="IPR017871">
    <property type="entry name" value="ABC_transporter-like_CS"/>
</dbReference>
<dbReference type="InterPro" id="IPR015860">
    <property type="entry name" value="ABC_transpr_TagH-like"/>
</dbReference>
<dbReference type="InterPro" id="IPR050683">
    <property type="entry name" value="Bact_Polysacc_Export_ATP-bd"/>
</dbReference>
<dbReference type="InterPro" id="IPR027417">
    <property type="entry name" value="P-loop_NTPase"/>
</dbReference>
<dbReference type="NCBIfam" id="NF010066">
    <property type="entry name" value="PRK13546.1"/>
    <property type="match status" value="1"/>
</dbReference>
<dbReference type="PANTHER" id="PTHR46743">
    <property type="entry name" value="TEICHOIC ACIDS EXPORT ATP-BINDING PROTEIN TAGH"/>
    <property type="match status" value="1"/>
</dbReference>
<dbReference type="PANTHER" id="PTHR46743:SF2">
    <property type="entry name" value="TEICHOIC ACIDS EXPORT ATP-BINDING PROTEIN TAGH"/>
    <property type="match status" value="1"/>
</dbReference>
<dbReference type="Pfam" id="PF00005">
    <property type="entry name" value="ABC_tran"/>
    <property type="match status" value="1"/>
</dbReference>
<dbReference type="SMART" id="SM00382">
    <property type="entry name" value="AAA"/>
    <property type="match status" value="1"/>
</dbReference>
<dbReference type="SUPFAM" id="SSF52540">
    <property type="entry name" value="P-loop containing nucleoside triphosphate hydrolases"/>
    <property type="match status" value="1"/>
</dbReference>
<dbReference type="PROSITE" id="PS00211">
    <property type="entry name" value="ABC_TRANSPORTER_1"/>
    <property type="match status" value="1"/>
</dbReference>
<dbReference type="PROSITE" id="PS50893">
    <property type="entry name" value="ABC_TRANSPORTER_2"/>
    <property type="match status" value="1"/>
</dbReference>
<dbReference type="PROSITE" id="PS51251">
    <property type="entry name" value="TAGH"/>
    <property type="match status" value="1"/>
</dbReference>